<dbReference type="EC" id="1.11.1.26" evidence="1"/>
<dbReference type="SMR" id="P82954"/>
<dbReference type="STRING" id="471.BUM88_05750"/>
<dbReference type="GO" id="GO:0005737">
    <property type="term" value="C:cytoplasm"/>
    <property type="evidence" value="ECO:0007669"/>
    <property type="project" value="UniProtKB-SubCell"/>
</dbReference>
<dbReference type="GO" id="GO:0102039">
    <property type="term" value="F:NADH-dependent peroxiredoxin activity"/>
    <property type="evidence" value="ECO:0007669"/>
    <property type="project" value="UniProtKB-EC"/>
</dbReference>
<protein>
    <recommendedName>
        <fullName>Alkyl hydroperoxide reductase C</fullName>
        <ecNumber evidence="1">1.11.1.26</ecNumber>
    </recommendedName>
    <alternativeName>
        <fullName>Peroxiredoxin</fullName>
    </alternativeName>
    <alternativeName>
        <fullName>Thioredoxin peroxidase</fullName>
    </alternativeName>
</protein>
<evidence type="ECO:0000250" key="1">
    <source>
        <dbReference type="UniProtKB" id="P0A251"/>
    </source>
</evidence>
<evidence type="ECO:0000250" key="2">
    <source>
        <dbReference type="UniProtKB" id="P0AE08"/>
    </source>
</evidence>
<evidence type="ECO:0000269" key="3">
    <source>
    </source>
</evidence>
<evidence type="ECO:0000303" key="4">
    <source>
    </source>
</evidence>
<evidence type="ECO:0000305" key="5"/>
<comment type="function">
    <text evidence="1">Thiol-specific peroxidase that catalyzes the reduction of hydrogen peroxide and organic hydroperoxides to water and alcohols, respectively. Plays a role in cell protection against oxidative stress by detoxifying peroxides.</text>
</comment>
<comment type="catalytic activity">
    <reaction evidence="1">
        <text>a hydroperoxide + NADH + H(+) = an alcohol + NAD(+) + H2O</text>
        <dbReference type="Rhea" id="RHEA:62628"/>
        <dbReference type="ChEBI" id="CHEBI:15377"/>
        <dbReference type="ChEBI" id="CHEBI:15378"/>
        <dbReference type="ChEBI" id="CHEBI:30879"/>
        <dbReference type="ChEBI" id="CHEBI:35924"/>
        <dbReference type="ChEBI" id="CHEBI:57540"/>
        <dbReference type="ChEBI" id="CHEBI:57945"/>
        <dbReference type="EC" id="1.11.1.26"/>
    </reaction>
</comment>
<comment type="subunit">
    <text evidence="1">Homodimer; disulfide-linked, upon oxidation. 5 homodimers assemble to form a ring-like decamer.</text>
</comment>
<comment type="subcellular location">
    <subcellularLocation>
        <location evidence="2">Cytoplasm</location>
    </subcellularLocation>
</comment>
<comment type="induction">
    <text evidence="3">By oxidative stress, primary alcohols, monocyclic aromatics and heat shock.</text>
</comment>
<comment type="miscellaneous">
    <text evidence="1">The active site is a conserved redox-active cysteine residue, the peroxidatic cysteine (C(P)), which makes the nucleophilic attack on the peroxide substrate. The peroxide oxidizes the C(P)-SH to cysteine sulfenic acid (C(P)-SOH), which then reacts with another cysteine residue, the resolving cysteine (C(R)), to form a disulfide bridge. The disulfide is subsequently reduced by an appropriate electron donor to complete the catalytic cycle. In this typical 2-Cys peroxiredoxin, C(R) is provided by the other dimeric subunit to form an intersubunit disulfide. The disulfide is subsequently reduced by AhpF.</text>
</comment>
<comment type="similarity">
    <text evidence="5">Belongs to the peroxiredoxin family. AhpC/Prx1 subfamily.</text>
</comment>
<organism evidence="5">
    <name type="scientific">Acinetobacter calcoaceticus</name>
    <dbReference type="NCBI Taxonomy" id="471"/>
    <lineage>
        <taxon>Bacteria</taxon>
        <taxon>Pseudomonadati</taxon>
        <taxon>Pseudomonadota</taxon>
        <taxon>Gammaproteobacteria</taxon>
        <taxon>Moraxellales</taxon>
        <taxon>Moraxellaceae</taxon>
        <taxon>Acinetobacter</taxon>
        <taxon>Acinetobacter calcoaceticus/baumannii complex</taxon>
    </lineage>
</organism>
<feature type="chain" id="PRO_0000135112" description="Alkyl hydroperoxide reductase C">
    <location>
        <begin position="1"/>
        <end position="25" status="greater than"/>
    </location>
</feature>
<feature type="non-terminal residue" evidence="4">
    <location>
        <position position="25"/>
    </location>
</feature>
<proteinExistence type="evidence at protein level"/>
<name>AHPC_ACICA</name>
<gene>
    <name type="primary">ahpC</name>
</gene>
<reference evidence="5" key="1">
    <citation type="journal article" date="2001" name="FEMS Microbiol. Lett.">
        <title>Protein synthesis patterns in Acinetobacter calcoaceticus induced by phenol and catechol show specificities of responses to chemostress.</title>
        <authorList>
            <person name="Benndorf D."/>
            <person name="Loffhagen N."/>
            <person name="Babel W."/>
        </authorList>
    </citation>
    <scope>PROTEIN SEQUENCE</scope>
    <scope>INDUCTION</scope>
    <source>
        <strain>69-V</strain>
    </source>
</reference>
<accession>P82954</accession>
<keyword id="KW-0049">Antioxidant</keyword>
<keyword id="KW-0963">Cytoplasm</keyword>
<keyword id="KW-0903">Direct protein sequencing</keyword>
<keyword id="KW-1015">Disulfide bond</keyword>
<keyword id="KW-0560">Oxidoreductase</keyword>
<keyword id="KW-0575">Peroxidase</keyword>
<keyword id="KW-0676">Redox-active center</keyword>
<keyword id="KW-0346">Stress response</keyword>
<sequence>SLINTEVKPFQATAYHNGQFVEVNE</sequence>